<organismHost>
    <name type="scientific">Saimiri sciureus</name>
    <name type="common">Common squirrel monkey</name>
    <dbReference type="NCBI Taxonomy" id="9521"/>
</organismHost>
<accession>Q01055</accession>
<comment type="function">
    <text evidence="2">Plays an essential role in cytoplasmic secondary envelopment during viral egress. Interacts with the capsid via the large tegument protein/LTP and participates in its transport to the host trans-Golgi network (TGN) where secondary envelopment occurs. Modulates tegumentation and capsid accumulation at the viral assembly complex.</text>
</comment>
<comment type="subunit">
    <text evidence="2">Interacts (via C-terminus) with the large tegument protein/LTP (via N-terminus).</text>
</comment>
<comment type="subcellular location">
    <subcellularLocation>
        <location evidence="2">Virion tegument</location>
    </subcellularLocation>
    <subcellularLocation>
        <location evidence="2">Host cytoplasm</location>
    </subcellularLocation>
    <subcellularLocation>
        <location evidence="2">Host nucleus</location>
    </subcellularLocation>
    <subcellularLocation>
        <location evidence="2">Host Golgi apparatus</location>
        <location evidence="2">Host trans-Golgi network</location>
    </subcellularLocation>
</comment>
<comment type="similarity">
    <text evidence="2">Belongs to the herpesviridae inner tegument protein family.</text>
</comment>
<organism>
    <name type="scientific">Saimiriine herpesvirus 2 (strain 11)</name>
    <name type="common">SaHV-2</name>
    <name type="synonym">Herpesvirus saimiri</name>
    <dbReference type="NCBI Taxonomy" id="10383"/>
    <lineage>
        <taxon>Viruses</taxon>
        <taxon>Duplodnaviria</taxon>
        <taxon>Heunggongvirae</taxon>
        <taxon>Peploviricota</taxon>
        <taxon>Herviviricetes</taxon>
        <taxon>Herpesvirales</taxon>
        <taxon>Orthoherpesviridae</taxon>
        <taxon>Gammaherpesvirinae</taxon>
        <taxon>Rhadinovirus</taxon>
        <taxon>Rhadinovirus saimiriinegamma2</taxon>
        <taxon>Saimiriine herpesvirus 2</taxon>
    </lineage>
</organism>
<feature type="chain" id="PRO_0000116052" description="Inner tegument protein">
    <location>
        <begin position="1"/>
        <end position="899"/>
    </location>
</feature>
<feature type="region of interest" description="Interaction with large tegument protein" evidence="1">
    <location>
        <begin position="463"/>
        <end position="899"/>
    </location>
</feature>
<protein>
    <recommendedName>
        <fullName evidence="2">Inner tegument protein</fullName>
    </recommendedName>
</protein>
<dbReference type="EMBL" id="X64346">
    <property type="protein sequence ID" value="CAA45686.1"/>
    <property type="molecule type" value="Genomic_DNA"/>
</dbReference>
<dbReference type="EMBL" id="M86409">
    <property type="protein sequence ID" value="AAA46139.1"/>
    <property type="molecule type" value="Genomic_DNA"/>
</dbReference>
<dbReference type="RefSeq" id="NP_040265.1">
    <property type="nucleotide sequence ID" value="NC_001350.1"/>
</dbReference>
<dbReference type="KEGG" id="vg:1682478"/>
<dbReference type="Proteomes" id="UP000000587">
    <property type="component" value="Segment"/>
</dbReference>
<dbReference type="GO" id="GO:0044177">
    <property type="term" value="C:host cell Golgi apparatus"/>
    <property type="evidence" value="ECO:0007669"/>
    <property type="project" value="UniProtKB-SubCell"/>
</dbReference>
<dbReference type="GO" id="GO:0042025">
    <property type="term" value="C:host cell nucleus"/>
    <property type="evidence" value="ECO:0007669"/>
    <property type="project" value="UniProtKB-SubCell"/>
</dbReference>
<dbReference type="GO" id="GO:0019033">
    <property type="term" value="C:viral tegument"/>
    <property type="evidence" value="ECO:0007669"/>
    <property type="project" value="UniProtKB-SubCell"/>
</dbReference>
<dbReference type="GO" id="GO:0019068">
    <property type="term" value="P:virion assembly"/>
    <property type="evidence" value="ECO:0007669"/>
    <property type="project" value="InterPro"/>
</dbReference>
<dbReference type="HAMAP" id="MF_04043">
    <property type="entry name" value="HSV_ITP"/>
    <property type="match status" value="1"/>
</dbReference>
<dbReference type="InterPro" id="IPR007611">
    <property type="entry name" value="Herpes_U30"/>
</dbReference>
<dbReference type="InterPro" id="IPR034738">
    <property type="entry name" value="HSV_ITP"/>
</dbReference>
<dbReference type="Pfam" id="PF04523">
    <property type="entry name" value="Herpes_U30"/>
    <property type="match status" value="1"/>
</dbReference>
<sequence>MSVKPLTELTKNLEAASNELLKTKVLMDMELNYLSIEQLESAQNITDFLNILKQTSSQYSTFIHQHFLFYLLKLSTFSTLNYDLESIKQYMNILNNVCDVATTIHATSSSNFLNNQTVINHIKQYITSNATFTGLSEPIVPNNVISTFRCVEEVVHVCFQCYWHFPFQAQIPQIPNGALEKWLLTQHFKFLNLDYTAFNSLKDQATYLITHEKHLFVPLSSSEYSLTLPLAKNQALNIYTSFTTNTITKSNVPVLAFSAKELTDATPELFFLYDFIIEALYHEHSYNVPQNIIEQFISKNTQFMTDLCNTIQIKCSNKSLTSSEIRHIKELLESCGLTEECCHRLQTSVLISNVSFTSNSWKGYETFISLISQLVLFSDFFYKCLFYFSPTSIGHSKITEILNTVSAIESETLSHANKFSWKLANMLSFFIPKAPSKIILETYTHISPYLMKSAFSIWAKKTWNYTWLDATSPHPTQTHTFKHAPVISQSEVQKYCENLQLGTTEYDSRIVNSHLFAEEFITHHIIPTLTAILQNKVQKNRALFQLRWLIVFASDEAKGLYRIRRPLGLLYFQIIEIFHDSNAAAAAILNVLDYLNEIQQLIQYYVPTYTTPIKFIQELFSIKYKPQSTELSKSIQKFIAETETCVKDILPFIQLGTNMCNTTYYHIENTYNINIQGQSPARLDTKALTHAIKAIQGLTKESWTTISQSYKELQTAYIQLATILETIEKISQHSIAIKVSNPNFIKLNNTFLQCFKKYNTIANLITNSHSFNLTRYFRQIFEPELIPITTVQKILNFNDETDDPQPFLDSLSQPLYSHTNAPKKSELTSEDFNRLLEFANPVFETAPSSIKLHYSDTFNTPQVNINWKTYEHTTYIADSPAELQFTHLTSAILDAELSK</sequence>
<keyword id="KW-1035">Host cytoplasm</keyword>
<keyword id="KW-1040">Host Golgi apparatus</keyword>
<keyword id="KW-1048">Host nucleus</keyword>
<keyword id="KW-1185">Reference proteome</keyword>
<keyword id="KW-0946">Virion</keyword>
<keyword id="KW-0920">Virion tegument</keyword>
<name>ITP_SHV21</name>
<reference key="1">
    <citation type="journal article" date="1992" name="J. Virol.">
        <title>Primary structure of the herpesvirus saimiri genome.</title>
        <authorList>
            <person name="Albrecht J.-C."/>
            <person name="Nicholas J."/>
            <person name="Biller D."/>
            <person name="Cameron K.R."/>
            <person name="Biesinger B."/>
            <person name="Newman C."/>
            <person name="Wittmann S."/>
            <person name="Craxton M.A."/>
            <person name="Coleman H."/>
            <person name="Fleckenstein B."/>
            <person name="Honess R.W."/>
        </authorList>
    </citation>
    <scope>NUCLEOTIDE SEQUENCE [LARGE SCALE GENOMIC DNA]</scope>
</reference>
<reference key="2">
    <citation type="journal article" date="1992" name="Virology">
        <title>Analysis of nucleotide sequence of the rightmost 43 kbp of herpesvirus saimiri (HVS) L-DNA: general conservation of genetic organization between HVS and Epstein-Barr virus.</title>
        <authorList>
            <person name="Nicholas J."/>
            <person name="Cameron K.R."/>
            <person name="Coleman H."/>
            <person name="Newman C."/>
            <person name="Honess R.W."/>
        </authorList>
    </citation>
    <scope>NUCLEOTIDE SEQUENCE [GENOMIC DNA]</scope>
</reference>
<evidence type="ECO:0000250" key="1">
    <source>
        <dbReference type="UniProtKB" id="P10221"/>
    </source>
</evidence>
<evidence type="ECO:0000255" key="2">
    <source>
        <dbReference type="HAMAP-Rule" id="MF_04043"/>
    </source>
</evidence>
<gene>
    <name type="primary">63</name>
    <name type="synonym">EERF1</name>
</gene>
<proteinExistence type="inferred from homology"/>